<organism>
    <name type="scientific">Pseudomonas aeruginosa (strain ATCC 15692 / DSM 22644 / CIP 104116 / JCM 14847 / LMG 12228 / 1C / PRS 101 / PAO1)</name>
    <dbReference type="NCBI Taxonomy" id="208964"/>
    <lineage>
        <taxon>Bacteria</taxon>
        <taxon>Pseudomonadati</taxon>
        <taxon>Pseudomonadota</taxon>
        <taxon>Gammaproteobacteria</taxon>
        <taxon>Pseudomonadales</taxon>
        <taxon>Pseudomonadaceae</taxon>
        <taxon>Pseudomonas</taxon>
    </lineage>
</organism>
<gene>
    <name evidence="1" type="primary">tauB</name>
    <name type="ordered locus">PA3937</name>
</gene>
<feature type="chain" id="PRO_0000093011" description="Taurine import ATP-binding protein TauB">
    <location>
        <begin position="1"/>
        <end position="263"/>
    </location>
</feature>
<feature type="domain" description="ABC transporter" evidence="1">
    <location>
        <begin position="4"/>
        <end position="235"/>
    </location>
</feature>
<feature type="binding site" evidence="1">
    <location>
        <begin position="40"/>
        <end position="47"/>
    </location>
    <ligand>
        <name>ATP</name>
        <dbReference type="ChEBI" id="CHEBI:30616"/>
    </ligand>
</feature>
<comment type="function">
    <text evidence="1">Part of the ABC transporter complex TauABC involved in taurine import. Responsible for energy coupling to the transport system.</text>
</comment>
<comment type="catalytic activity">
    <reaction evidence="1">
        <text>taurine(out) + ATP + H2O = taurine(in) + ADP + phosphate + H(+)</text>
        <dbReference type="Rhea" id="RHEA:14613"/>
        <dbReference type="ChEBI" id="CHEBI:15377"/>
        <dbReference type="ChEBI" id="CHEBI:15378"/>
        <dbReference type="ChEBI" id="CHEBI:30616"/>
        <dbReference type="ChEBI" id="CHEBI:43474"/>
        <dbReference type="ChEBI" id="CHEBI:456216"/>
        <dbReference type="ChEBI" id="CHEBI:507393"/>
        <dbReference type="EC" id="7.6.2.7"/>
    </reaction>
</comment>
<comment type="subunit">
    <text evidence="1">The complex is composed of two ATP-binding proteins (TauB), two transmembrane proteins (TauC) and a solute-binding protein (TauA).</text>
</comment>
<comment type="subcellular location">
    <subcellularLocation>
        <location evidence="1">Cell inner membrane</location>
        <topology evidence="1">Peripheral membrane protein</topology>
    </subcellularLocation>
</comment>
<comment type="similarity">
    <text evidence="1">Belongs to the ABC transporter superfamily. Taurine importer (TC 3.A.1.17.1) family.</text>
</comment>
<protein>
    <recommendedName>
        <fullName evidence="1">Taurine import ATP-binding protein TauB</fullName>
        <ecNumber evidence="1">7.6.2.7</ecNumber>
    </recommendedName>
</protein>
<sequence length="263" mass="28754">MSRLTAEAISLSFEQRGQRRAILRDLSLGLAKGESLVVLGPSGCGKSTLLNILAGFQKPDQGRVQIDGRTLEGPGGERGVVFQDDALMPWLNALDNVALGLRIRGLGKAERTARARQVLQLVGLQEYAEQSVAQLSGGQRQRLGLARALAVEPDFLLLDEPFGALDALTRERMQVLLLDLWKQTGKGLFLITHSVDEALFLATDLVVMDGPPARIVKRLPVDFARRYAAGETVRSIKADPEFGRLRQALLDEFLDVAEAEHAH</sequence>
<proteinExistence type="inferred from homology"/>
<keyword id="KW-0067">ATP-binding</keyword>
<keyword id="KW-0997">Cell inner membrane</keyword>
<keyword id="KW-1003">Cell membrane</keyword>
<keyword id="KW-0472">Membrane</keyword>
<keyword id="KW-0547">Nucleotide-binding</keyword>
<keyword id="KW-1185">Reference proteome</keyword>
<keyword id="KW-1278">Translocase</keyword>
<keyword id="KW-0813">Transport</keyword>
<name>TAUB_PSEAE</name>
<accession>Q9HX79</accession>
<reference key="1">
    <citation type="journal article" date="2000" name="Nature">
        <title>Complete genome sequence of Pseudomonas aeruginosa PAO1, an opportunistic pathogen.</title>
        <authorList>
            <person name="Stover C.K."/>
            <person name="Pham X.-Q.T."/>
            <person name="Erwin A.L."/>
            <person name="Mizoguchi S.D."/>
            <person name="Warrener P."/>
            <person name="Hickey M.J."/>
            <person name="Brinkman F.S.L."/>
            <person name="Hufnagle W.O."/>
            <person name="Kowalik D.J."/>
            <person name="Lagrou M."/>
            <person name="Garber R.L."/>
            <person name="Goltry L."/>
            <person name="Tolentino E."/>
            <person name="Westbrock-Wadman S."/>
            <person name="Yuan Y."/>
            <person name="Brody L.L."/>
            <person name="Coulter S.N."/>
            <person name="Folger K.R."/>
            <person name="Kas A."/>
            <person name="Larbig K."/>
            <person name="Lim R.M."/>
            <person name="Smith K.A."/>
            <person name="Spencer D.H."/>
            <person name="Wong G.K.-S."/>
            <person name="Wu Z."/>
            <person name="Paulsen I.T."/>
            <person name="Reizer J."/>
            <person name="Saier M.H. Jr."/>
            <person name="Hancock R.E.W."/>
            <person name="Lory S."/>
            <person name="Olson M.V."/>
        </authorList>
    </citation>
    <scope>NUCLEOTIDE SEQUENCE [LARGE SCALE GENOMIC DNA]</scope>
    <source>
        <strain>ATCC 15692 / DSM 22644 / CIP 104116 / JCM 14847 / LMG 12228 / 1C / PRS 101 / PAO1</strain>
    </source>
</reference>
<evidence type="ECO:0000255" key="1">
    <source>
        <dbReference type="HAMAP-Rule" id="MF_01714"/>
    </source>
</evidence>
<dbReference type="EC" id="7.6.2.7" evidence="1"/>
<dbReference type="EMBL" id="AE004091">
    <property type="protein sequence ID" value="AAG07324.1"/>
    <property type="molecule type" value="Genomic_DNA"/>
</dbReference>
<dbReference type="PIR" id="E83154">
    <property type="entry name" value="E83154"/>
</dbReference>
<dbReference type="RefSeq" id="NP_252626.1">
    <property type="nucleotide sequence ID" value="NC_002516.2"/>
</dbReference>
<dbReference type="RefSeq" id="WP_003114313.1">
    <property type="nucleotide sequence ID" value="NZ_QZGE01000001.1"/>
</dbReference>
<dbReference type="SMR" id="Q9HX79"/>
<dbReference type="FunCoup" id="Q9HX79">
    <property type="interactions" value="374"/>
</dbReference>
<dbReference type="STRING" id="208964.PA3937"/>
<dbReference type="PaxDb" id="208964-PA3937"/>
<dbReference type="DNASU" id="877909"/>
<dbReference type="GeneID" id="877909"/>
<dbReference type="KEGG" id="pae:PA3937"/>
<dbReference type="PATRIC" id="fig|208964.12.peg.4126"/>
<dbReference type="PseudoCAP" id="PA3937"/>
<dbReference type="HOGENOM" id="CLU_000604_1_22_6"/>
<dbReference type="InParanoid" id="Q9HX79"/>
<dbReference type="OrthoDB" id="9802264at2"/>
<dbReference type="PhylomeDB" id="Q9HX79"/>
<dbReference type="BioCyc" id="PAER208964:G1FZ6-4010-MONOMER"/>
<dbReference type="Proteomes" id="UP000002438">
    <property type="component" value="Chromosome"/>
</dbReference>
<dbReference type="GO" id="GO:0005886">
    <property type="term" value="C:plasma membrane"/>
    <property type="evidence" value="ECO:0007669"/>
    <property type="project" value="UniProtKB-SubCell"/>
</dbReference>
<dbReference type="GO" id="GO:0015411">
    <property type="term" value="F:ABC-type taurine transporter transporter activity"/>
    <property type="evidence" value="ECO:0007669"/>
    <property type="project" value="UniProtKB-EC"/>
</dbReference>
<dbReference type="GO" id="GO:0005524">
    <property type="term" value="F:ATP binding"/>
    <property type="evidence" value="ECO:0007669"/>
    <property type="project" value="UniProtKB-KW"/>
</dbReference>
<dbReference type="GO" id="GO:0016887">
    <property type="term" value="F:ATP hydrolysis activity"/>
    <property type="evidence" value="ECO:0007669"/>
    <property type="project" value="InterPro"/>
</dbReference>
<dbReference type="CDD" id="cd03293">
    <property type="entry name" value="ABC_NrtD_SsuB_transporters"/>
    <property type="match status" value="1"/>
</dbReference>
<dbReference type="Gene3D" id="3.40.50.300">
    <property type="entry name" value="P-loop containing nucleotide triphosphate hydrolases"/>
    <property type="match status" value="1"/>
</dbReference>
<dbReference type="InterPro" id="IPR003593">
    <property type="entry name" value="AAA+_ATPase"/>
</dbReference>
<dbReference type="InterPro" id="IPR003439">
    <property type="entry name" value="ABC_transporter-like_ATP-bd"/>
</dbReference>
<dbReference type="InterPro" id="IPR017871">
    <property type="entry name" value="ABC_transporter-like_CS"/>
</dbReference>
<dbReference type="InterPro" id="IPR050166">
    <property type="entry name" value="ABC_transporter_ATP-bind"/>
</dbReference>
<dbReference type="InterPro" id="IPR027417">
    <property type="entry name" value="P-loop_NTPase"/>
</dbReference>
<dbReference type="PANTHER" id="PTHR42788:SF18">
    <property type="entry name" value="TAURINE IMPORT ATP-BINDING PROTEIN TAUB"/>
    <property type="match status" value="1"/>
</dbReference>
<dbReference type="PANTHER" id="PTHR42788">
    <property type="entry name" value="TAURINE IMPORT ATP-BINDING PROTEIN-RELATED"/>
    <property type="match status" value="1"/>
</dbReference>
<dbReference type="Pfam" id="PF00005">
    <property type="entry name" value="ABC_tran"/>
    <property type="match status" value="1"/>
</dbReference>
<dbReference type="SMART" id="SM00382">
    <property type="entry name" value="AAA"/>
    <property type="match status" value="1"/>
</dbReference>
<dbReference type="SUPFAM" id="SSF52540">
    <property type="entry name" value="P-loop containing nucleoside triphosphate hydrolases"/>
    <property type="match status" value="1"/>
</dbReference>
<dbReference type="PROSITE" id="PS00211">
    <property type="entry name" value="ABC_TRANSPORTER_1"/>
    <property type="match status" value="1"/>
</dbReference>
<dbReference type="PROSITE" id="PS50893">
    <property type="entry name" value="ABC_TRANSPORTER_2"/>
    <property type="match status" value="1"/>
</dbReference>
<dbReference type="PROSITE" id="PS51250">
    <property type="entry name" value="TAUB"/>
    <property type="match status" value="1"/>
</dbReference>